<keyword id="KW-0175">Coiled coil</keyword>
<keyword id="KW-0963">Cytoplasm</keyword>
<keyword id="KW-0967">Endosome</keyword>
<keyword id="KW-0341">Growth regulation</keyword>
<keyword id="KW-0472">Membrane</keyword>
<keyword id="KW-0539">Nucleus</keyword>
<keyword id="KW-0653">Protein transport</keyword>
<keyword id="KW-1185">Reference proteome</keyword>
<keyword id="KW-0813">Transport</keyword>
<feature type="chain" id="PRO_0000365724" description="ESCRT-I complex subunit tsg101">
    <location>
        <begin position="1"/>
        <end position="478"/>
    </location>
</feature>
<feature type="domain" description="UEV" evidence="5">
    <location>
        <begin position="24"/>
        <end position="172"/>
    </location>
</feature>
<feature type="domain" description="SB" evidence="4">
    <location>
        <begin position="386"/>
        <end position="454"/>
    </location>
</feature>
<feature type="region of interest" description="Disordered" evidence="6">
    <location>
        <begin position="144"/>
        <end position="290"/>
    </location>
</feature>
<feature type="region of interest" description="Disordered" evidence="6">
    <location>
        <begin position="458"/>
        <end position="478"/>
    </location>
</feature>
<feature type="coiled-coil region" evidence="3">
    <location>
        <begin position="321"/>
        <end position="372"/>
    </location>
</feature>
<feature type="compositionally biased region" description="Pro residues" evidence="6">
    <location>
        <begin position="156"/>
        <end position="169"/>
    </location>
</feature>
<feature type="compositionally biased region" description="Polar residues" evidence="6">
    <location>
        <begin position="170"/>
        <end position="179"/>
    </location>
</feature>
<feature type="compositionally biased region" description="Low complexity" evidence="6">
    <location>
        <begin position="190"/>
        <end position="201"/>
    </location>
</feature>
<feature type="compositionally biased region" description="Pro residues" evidence="6">
    <location>
        <begin position="220"/>
        <end position="235"/>
    </location>
</feature>
<feature type="compositionally biased region" description="Low complexity" evidence="6">
    <location>
        <begin position="236"/>
        <end position="246"/>
    </location>
</feature>
<feature type="compositionally biased region" description="Pro residues" evidence="6">
    <location>
        <begin position="247"/>
        <end position="259"/>
    </location>
</feature>
<feature type="compositionally biased region" description="Pro residues" evidence="6">
    <location>
        <begin position="277"/>
        <end position="286"/>
    </location>
</feature>
<protein>
    <recommendedName>
        <fullName>ESCRT-I complex subunit tsg101</fullName>
    </recommendedName>
</protein>
<reference key="1">
    <citation type="journal article" date="2005" name="Nature">
        <title>The genome of the social amoeba Dictyostelium discoideum.</title>
        <authorList>
            <person name="Eichinger L."/>
            <person name="Pachebat J.A."/>
            <person name="Gloeckner G."/>
            <person name="Rajandream M.A."/>
            <person name="Sucgang R."/>
            <person name="Berriman M."/>
            <person name="Song J."/>
            <person name="Olsen R."/>
            <person name="Szafranski K."/>
            <person name="Xu Q."/>
            <person name="Tunggal B."/>
            <person name="Kummerfeld S."/>
            <person name="Madera M."/>
            <person name="Konfortov B.A."/>
            <person name="Rivero F."/>
            <person name="Bankier A.T."/>
            <person name="Lehmann R."/>
            <person name="Hamlin N."/>
            <person name="Davies R."/>
            <person name="Gaudet P."/>
            <person name="Fey P."/>
            <person name="Pilcher K."/>
            <person name="Chen G."/>
            <person name="Saunders D."/>
            <person name="Sodergren E.J."/>
            <person name="Davis P."/>
            <person name="Kerhornou A."/>
            <person name="Nie X."/>
            <person name="Hall N."/>
            <person name="Anjard C."/>
            <person name="Hemphill L."/>
            <person name="Bason N."/>
            <person name="Farbrother P."/>
            <person name="Desany B."/>
            <person name="Just E."/>
            <person name="Morio T."/>
            <person name="Rost R."/>
            <person name="Churcher C.M."/>
            <person name="Cooper J."/>
            <person name="Haydock S."/>
            <person name="van Driessche N."/>
            <person name="Cronin A."/>
            <person name="Goodhead I."/>
            <person name="Muzny D.M."/>
            <person name="Mourier T."/>
            <person name="Pain A."/>
            <person name="Lu M."/>
            <person name="Harper D."/>
            <person name="Lindsay R."/>
            <person name="Hauser H."/>
            <person name="James K.D."/>
            <person name="Quiles M."/>
            <person name="Madan Babu M."/>
            <person name="Saito T."/>
            <person name="Buchrieser C."/>
            <person name="Wardroper A."/>
            <person name="Felder M."/>
            <person name="Thangavelu M."/>
            <person name="Johnson D."/>
            <person name="Knights A."/>
            <person name="Loulseged H."/>
            <person name="Mungall K.L."/>
            <person name="Oliver K."/>
            <person name="Price C."/>
            <person name="Quail M.A."/>
            <person name="Urushihara H."/>
            <person name="Hernandez J."/>
            <person name="Rabbinowitsch E."/>
            <person name="Steffen D."/>
            <person name="Sanders M."/>
            <person name="Ma J."/>
            <person name="Kohara Y."/>
            <person name="Sharp S."/>
            <person name="Simmonds M.N."/>
            <person name="Spiegler S."/>
            <person name="Tivey A."/>
            <person name="Sugano S."/>
            <person name="White B."/>
            <person name="Walker D."/>
            <person name="Woodward J.R."/>
            <person name="Winckler T."/>
            <person name="Tanaka Y."/>
            <person name="Shaulsky G."/>
            <person name="Schleicher M."/>
            <person name="Weinstock G.M."/>
            <person name="Rosenthal A."/>
            <person name="Cox E.C."/>
            <person name="Chisholm R.L."/>
            <person name="Gibbs R.A."/>
            <person name="Loomis W.F."/>
            <person name="Platzer M."/>
            <person name="Kay R.R."/>
            <person name="Williams J.G."/>
            <person name="Dear P.H."/>
            <person name="Noegel A.A."/>
            <person name="Barrell B.G."/>
            <person name="Kuspa A."/>
        </authorList>
    </citation>
    <scope>NUCLEOTIDE SEQUENCE [LARGE SCALE GENOMIC DNA]</scope>
    <source>
        <strain>AX4</strain>
    </source>
</reference>
<comment type="function">
    <text evidence="2">Component of the ESCRT-I complex, a regulator of vesicular trafficking process. Required for the sorting of endocytic ubiquitinated cargos into multivesicular bodies. May be involved in cell growth and differentiation. Acts as a negative growth regulator (By similarity).</text>
</comment>
<comment type="subunit">
    <text evidence="2">Component of the ESCRT-I complex (endosomal sorting complex required for transport I).</text>
</comment>
<comment type="subcellular location">
    <subcellularLocation>
        <location evidence="1">Cytoplasm</location>
    </subcellularLocation>
    <subcellularLocation>
        <location evidence="1">Membrane</location>
        <topology evidence="1">Peripheral membrane protein</topology>
    </subcellularLocation>
    <subcellularLocation>
        <location evidence="1">Nucleus</location>
    </subcellularLocation>
    <subcellularLocation>
        <location evidence="1">Late endosome membrane</location>
        <topology evidence="1">Peripheral membrane protein</topology>
    </subcellularLocation>
</comment>
<comment type="domain">
    <text evidence="1">The UEV domain is required for the interaction of the complex with ubiquitin.</text>
</comment>
<comment type="similarity">
    <text evidence="7">Belongs to the ubiquitin-conjugating enzyme family. UEV subfamily.</text>
</comment>
<name>TS101_DICDI</name>
<accession>Q54LJ3</accession>
<gene>
    <name type="primary">tsg101</name>
    <name type="ORF">DDB_G0286797</name>
</gene>
<evidence type="ECO:0000250" key="1"/>
<evidence type="ECO:0000250" key="2">
    <source>
        <dbReference type="UniProtKB" id="Q99816"/>
    </source>
</evidence>
<evidence type="ECO:0000255" key="3"/>
<evidence type="ECO:0000255" key="4">
    <source>
        <dbReference type="PROSITE-ProRule" id="PRU00644"/>
    </source>
</evidence>
<evidence type="ECO:0000255" key="5">
    <source>
        <dbReference type="PROSITE-ProRule" id="PRU00652"/>
    </source>
</evidence>
<evidence type="ECO:0000256" key="6">
    <source>
        <dbReference type="SAM" id="MobiDB-lite"/>
    </source>
</evidence>
<evidence type="ECO:0000305" key="7"/>
<organism>
    <name type="scientific">Dictyostelium discoideum</name>
    <name type="common">Social amoeba</name>
    <dbReference type="NCBI Taxonomy" id="44689"/>
    <lineage>
        <taxon>Eukaryota</taxon>
        <taxon>Amoebozoa</taxon>
        <taxon>Evosea</taxon>
        <taxon>Eumycetozoa</taxon>
        <taxon>Dictyostelia</taxon>
        <taxon>Dictyosteliales</taxon>
        <taxon>Dictyosteliaceae</taxon>
        <taxon>Dictyostelium</taxon>
    </lineage>
</organism>
<proteinExistence type="inferred from homology"/>
<sequence length="478" mass="54919">MYGHHGYPMHAHQQQMVNPTLAIVDNKMHTLSTFLNYIRAYRDPLRISKDLKETFHLFPNLSPFYENIPNRVNLICIKGTIPICFKGINYYLPIIVWVPLNYPQEFPTMVLDPTPEMRIVKNHHHVNLQGLVYHPYISSWSSNSTMETRVSQQQQPQPPQNNISPPPYGSSPTNNNVAAQQQQPPPPYGSSPSTSNSSSYTQPPPSYDSIKNKTNNTSSLPPPKQPQTSPPPPPTQQQQQQQNNNIIPPPQQPSPPPAYTEPTAAKQQQQQTSPSVKPLPPLPPQPVIDKKSEMVDQCTIKLQELLSKFYDTTSLEIKDFEAHNKSLEELSKKKLLEKEELSNQLATYNSQIDQLNENIEQLEKWINENDKSDSNIDIDQILGPKDSLSKQLLKLVSDDSTIEDLLYYLDKALHSNRISLEEYLKNVRSLSRDQFIIRATVKKVQFIIRQNQQQLQQQQQQQNSPQRQQYNQQQYFSK</sequence>
<dbReference type="EMBL" id="AAFI02000089">
    <property type="protein sequence ID" value="EAL64154.1"/>
    <property type="molecule type" value="Genomic_DNA"/>
</dbReference>
<dbReference type="RefSeq" id="XP_637568.1">
    <property type="nucleotide sequence ID" value="XM_632476.1"/>
</dbReference>
<dbReference type="SMR" id="Q54LJ3"/>
<dbReference type="FunCoup" id="Q54LJ3">
    <property type="interactions" value="214"/>
</dbReference>
<dbReference type="STRING" id="44689.Q54LJ3"/>
<dbReference type="GlyGen" id="Q54LJ3">
    <property type="glycosylation" value="1 site"/>
</dbReference>
<dbReference type="PaxDb" id="44689-DDB0234022"/>
<dbReference type="ABCD" id="Q54LJ3">
    <property type="antibodies" value="3 sequenced antibodies"/>
</dbReference>
<dbReference type="EnsemblProtists" id="EAL64154">
    <property type="protein sequence ID" value="EAL64154"/>
    <property type="gene ID" value="DDB_G0286797"/>
</dbReference>
<dbReference type="GeneID" id="8625708"/>
<dbReference type="KEGG" id="ddi:DDB_G0286797"/>
<dbReference type="dictyBase" id="DDB_G0286797">
    <property type="gene designation" value="tsg101"/>
</dbReference>
<dbReference type="VEuPathDB" id="AmoebaDB:DDB_G0286797"/>
<dbReference type="eggNOG" id="KOG2391">
    <property type="taxonomic scope" value="Eukaryota"/>
</dbReference>
<dbReference type="HOGENOM" id="CLU_017548_2_0_1"/>
<dbReference type="InParanoid" id="Q54LJ3"/>
<dbReference type="OMA" id="YMNFPQP"/>
<dbReference type="PhylomeDB" id="Q54LJ3"/>
<dbReference type="Reactome" id="R-DDI-917729">
    <property type="pathway name" value="Endosomal Sorting Complex Required For Transport (ESCRT)"/>
</dbReference>
<dbReference type="PRO" id="PR:Q54LJ3"/>
<dbReference type="Proteomes" id="UP000002195">
    <property type="component" value="Chromosome 4"/>
</dbReference>
<dbReference type="GO" id="GO:0000813">
    <property type="term" value="C:ESCRT I complex"/>
    <property type="evidence" value="ECO:0000250"/>
    <property type="project" value="dictyBase"/>
</dbReference>
<dbReference type="GO" id="GO:0031902">
    <property type="term" value="C:late endosome membrane"/>
    <property type="evidence" value="ECO:0007669"/>
    <property type="project" value="UniProtKB-SubCell"/>
</dbReference>
<dbReference type="GO" id="GO:0005634">
    <property type="term" value="C:nucleus"/>
    <property type="evidence" value="ECO:0007669"/>
    <property type="project" value="UniProtKB-SubCell"/>
</dbReference>
<dbReference type="GO" id="GO:0140220">
    <property type="term" value="C:pathogen-containing vacuole"/>
    <property type="evidence" value="ECO:0000314"/>
    <property type="project" value="dictyBase"/>
</dbReference>
<dbReference type="GO" id="GO:0005886">
    <property type="term" value="C:plasma membrane"/>
    <property type="evidence" value="ECO:0000314"/>
    <property type="project" value="dictyBase"/>
</dbReference>
<dbReference type="GO" id="GO:0043130">
    <property type="term" value="F:ubiquitin binding"/>
    <property type="evidence" value="ECO:0000318"/>
    <property type="project" value="GO_Central"/>
</dbReference>
<dbReference type="GO" id="GO:0050830">
    <property type="term" value="P:defense response to Gram-positive bacterium"/>
    <property type="evidence" value="ECO:0000315"/>
    <property type="project" value="dictyBase"/>
</dbReference>
<dbReference type="GO" id="GO:0008333">
    <property type="term" value="P:endosome to lysosome transport"/>
    <property type="evidence" value="ECO:0000318"/>
    <property type="project" value="GO_Central"/>
</dbReference>
<dbReference type="GO" id="GO:0001778">
    <property type="term" value="P:plasma membrane repair"/>
    <property type="evidence" value="ECO:0000315"/>
    <property type="project" value="dictyBase"/>
</dbReference>
<dbReference type="GO" id="GO:0036211">
    <property type="term" value="P:protein modification process"/>
    <property type="evidence" value="ECO:0007669"/>
    <property type="project" value="InterPro"/>
</dbReference>
<dbReference type="GO" id="GO:0015031">
    <property type="term" value="P:protein transport"/>
    <property type="evidence" value="ECO:0007669"/>
    <property type="project" value="UniProtKB-KW"/>
</dbReference>
<dbReference type="GO" id="GO:0009611">
    <property type="term" value="P:response to wounding"/>
    <property type="evidence" value="ECO:0000314"/>
    <property type="project" value="dictyBase"/>
</dbReference>
<dbReference type="GO" id="GO:0030587">
    <property type="term" value="P:sorocarp development"/>
    <property type="evidence" value="ECO:0000315"/>
    <property type="project" value="dictyBase"/>
</dbReference>
<dbReference type="CDD" id="cd11685">
    <property type="entry name" value="UEV_TSG101-like"/>
    <property type="match status" value="1"/>
</dbReference>
<dbReference type="Gene3D" id="6.10.140.820">
    <property type="match status" value="1"/>
</dbReference>
<dbReference type="Gene3D" id="3.10.110.10">
    <property type="entry name" value="Ubiquitin Conjugating Enzyme"/>
    <property type="match status" value="1"/>
</dbReference>
<dbReference type="InterPro" id="IPR052070">
    <property type="entry name" value="ESCRT-I_UEV_domain"/>
</dbReference>
<dbReference type="InterPro" id="IPR037202">
    <property type="entry name" value="ESCRT_assembly_dom"/>
</dbReference>
<dbReference type="InterPro" id="IPR017916">
    <property type="entry name" value="SB_dom"/>
</dbReference>
<dbReference type="InterPro" id="IPR016135">
    <property type="entry name" value="UBQ-conjugating_enzyme/RWD"/>
</dbReference>
<dbReference type="InterPro" id="IPR008883">
    <property type="entry name" value="UEV_N"/>
</dbReference>
<dbReference type="PANTHER" id="PTHR23306:SF3">
    <property type="entry name" value="TUMOR SUPPRESSOR PROTEIN 101"/>
    <property type="match status" value="1"/>
</dbReference>
<dbReference type="PANTHER" id="PTHR23306">
    <property type="entry name" value="TUMOR SUSCEPTIBILITY GENE 101 PROTEIN-RELATED"/>
    <property type="match status" value="1"/>
</dbReference>
<dbReference type="Pfam" id="PF05743">
    <property type="entry name" value="UEV"/>
    <property type="match status" value="1"/>
</dbReference>
<dbReference type="Pfam" id="PF09454">
    <property type="entry name" value="Vps23_core"/>
    <property type="match status" value="1"/>
</dbReference>
<dbReference type="SUPFAM" id="SSF140111">
    <property type="entry name" value="Endosomal sorting complex assembly domain"/>
    <property type="match status" value="1"/>
</dbReference>
<dbReference type="SUPFAM" id="SSF54495">
    <property type="entry name" value="UBC-like"/>
    <property type="match status" value="1"/>
</dbReference>
<dbReference type="PROSITE" id="PS51312">
    <property type="entry name" value="SB"/>
    <property type="match status" value="1"/>
</dbReference>
<dbReference type="PROSITE" id="PS51322">
    <property type="entry name" value="UEV"/>
    <property type="match status" value="1"/>
</dbReference>